<organism>
    <name type="scientific">Sporobolus michauxianus</name>
    <name type="common">Prairie cordgrass</name>
    <name type="synonym">Spartina pectinata</name>
    <dbReference type="NCBI Taxonomy" id="65991"/>
    <lineage>
        <taxon>Eukaryota</taxon>
        <taxon>Viridiplantae</taxon>
        <taxon>Streptophyta</taxon>
        <taxon>Embryophyta</taxon>
        <taxon>Tracheophyta</taxon>
        <taxon>Spermatophyta</taxon>
        <taxon>Magnoliopsida</taxon>
        <taxon>Liliopsida</taxon>
        <taxon>Poales</taxon>
        <taxon>Poaceae</taxon>
        <taxon>PACMAD clade</taxon>
        <taxon>Chloridoideae</taxon>
        <taxon>Zoysieae</taxon>
        <taxon>Sporobolinae</taxon>
        <taxon>Sporobolus</taxon>
    </lineage>
</organism>
<comment type="function">
    <text evidence="1">Usually encoded in the trnK tRNA gene intron. Probably assists in splicing its own and other chloroplast group II introns.</text>
</comment>
<comment type="subcellular location">
    <subcellularLocation>
        <location>Plastid</location>
        <location>Chloroplast</location>
    </subcellularLocation>
</comment>
<comment type="similarity">
    <text evidence="1">Belongs to the intron maturase 2 family. MatK subfamily.</text>
</comment>
<proteinExistence type="inferred from homology"/>
<feature type="chain" id="PRO_0000143715" description="Maturase K">
    <location>
        <begin position="1"/>
        <end position="513"/>
    </location>
</feature>
<reference key="1">
    <citation type="submission" date="2000-10" db="EMBL/GenBank/DDBJ databases">
        <title>A phylogeny of Chloridoideae (Poaceae) based on matK sequences.</title>
        <authorList>
            <person name="Hilu K.W."/>
            <person name="Alice L.A."/>
        </authorList>
    </citation>
    <scope>NUCLEOTIDE SEQUENCE [GENOMIC DNA]</scope>
</reference>
<gene>
    <name evidence="1" type="primary">matK</name>
</gene>
<name>MATK_SPOMI</name>
<sequence>MEKLEGYSEKQKSRQQYFVYPLLFQEYIYAFAHDYGLKGSEPVEIFGCNNKKFSSLLVKRLIIRMYQQNFRINSVNHPNQDRLLDHSNHFYSEFYSQILSEGFAIVLEIPFSLGELSCPEEKEIPKFQNLQSIHSIFPFLEDKFLHLHYLSHIEIPYPIHFEILVQLLEYRIQDVPSLHLLRFFLNYYSNWNSLITSMKSIFLLKKENKRLFRFLYNSYVSEYEFFLLFLRKQSSCLRLISSGTFLERIHFSMKMEHFGVMYPGFFRKTLWFFMDPLMHYVRYQGKAILASKGTLLLKKKWKSYLVNFSQYFLSFWTQPQRIRLNQLTNSCFDFLGYRSSVPINTFLVRNQMLENFFLIDTRMKKFDTTAPATPLIGSLSKAQFCTGLGHPISKPIWTDLSDWDILDRFGRICRNLFHYHSGSSKKQTLYQLKYILRLSCARTLARKHKSTVRTFMQRLGSVFLEEFFTEEEQVFSLMFAKTTHFSFHGSHSERIWYLDIIRIDDLVNPLILN</sequence>
<keyword id="KW-0150">Chloroplast</keyword>
<keyword id="KW-0507">mRNA processing</keyword>
<keyword id="KW-0934">Plastid</keyword>
<keyword id="KW-0694">RNA-binding</keyword>
<keyword id="KW-0819">tRNA processing</keyword>
<geneLocation type="chloroplast"/>
<dbReference type="EMBL" id="AF312353">
    <property type="protein sequence ID" value="AAK60044.1"/>
    <property type="molecule type" value="Genomic_DNA"/>
</dbReference>
<dbReference type="RefSeq" id="YP_009233928.1">
    <property type="nucleotide sequence ID" value="NC_029416.1"/>
</dbReference>
<dbReference type="GeneID" id="26893924"/>
<dbReference type="GO" id="GO:0009507">
    <property type="term" value="C:chloroplast"/>
    <property type="evidence" value="ECO:0007669"/>
    <property type="project" value="UniProtKB-SubCell"/>
</dbReference>
<dbReference type="GO" id="GO:0003723">
    <property type="term" value="F:RNA binding"/>
    <property type="evidence" value="ECO:0007669"/>
    <property type="project" value="UniProtKB-KW"/>
</dbReference>
<dbReference type="GO" id="GO:0006397">
    <property type="term" value="P:mRNA processing"/>
    <property type="evidence" value="ECO:0007669"/>
    <property type="project" value="UniProtKB-KW"/>
</dbReference>
<dbReference type="GO" id="GO:0008380">
    <property type="term" value="P:RNA splicing"/>
    <property type="evidence" value="ECO:0007669"/>
    <property type="project" value="UniProtKB-UniRule"/>
</dbReference>
<dbReference type="GO" id="GO:0008033">
    <property type="term" value="P:tRNA processing"/>
    <property type="evidence" value="ECO:0007669"/>
    <property type="project" value="UniProtKB-KW"/>
</dbReference>
<dbReference type="HAMAP" id="MF_01390">
    <property type="entry name" value="MatK"/>
    <property type="match status" value="1"/>
</dbReference>
<dbReference type="InterPro" id="IPR024937">
    <property type="entry name" value="Domain_X"/>
</dbReference>
<dbReference type="InterPro" id="IPR002866">
    <property type="entry name" value="Maturase_MatK"/>
</dbReference>
<dbReference type="InterPro" id="IPR024942">
    <property type="entry name" value="Maturase_MatK_N"/>
</dbReference>
<dbReference type="PANTHER" id="PTHR34811">
    <property type="entry name" value="MATURASE K"/>
    <property type="match status" value="1"/>
</dbReference>
<dbReference type="PANTHER" id="PTHR34811:SF1">
    <property type="entry name" value="MATURASE K"/>
    <property type="match status" value="1"/>
</dbReference>
<dbReference type="Pfam" id="PF01348">
    <property type="entry name" value="Intron_maturas2"/>
    <property type="match status" value="1"/>
</dbReference>
<dbReference type="Pfam" id="PF01824">
    <property type="entry name" value="MatK_N"/>
    <property type="match status" value="1"/>
</dbReference>
<evidence type="ECO:0000255" key="1">
    <source>
        <dbReference type="HAMAP-Rule" id="MF_01390"/>
    </source>
</evidence>
<accession>Q95F35</accession>
<protein>
    <recommendedName>
        <fullName evidence="1">Maturase K</fullName>
    </recommendedName>
    <alternativeName>
        <fullName evidence="1">Intron maturase</fullName>
    </alternativeName>
</protein>